<name>PFKA_ENTH1</name>
<keyword id="KW-0021">Allosteric enzyme</keyword>
<keyword id="KW-0067">ATP-binding</keyword>
<keyword id="KW-0963">Cytoplasm</keyword>
<keyword id="KW-0324">Glycolysis</keyword>
<keyword id="KW-0418">Kinase</keyword>
<keyword id="KW-0460">Magnesium</keyword>
<keyword id="KW-0479">Metal-binding</keyword>
<keyword id="KW-0547">Nucleotide-binding</keyword>
<keyword id="KW-1185">Reference proteome</keyword>
<keyword id="KW-0808">Transferase</keyword>
<feature type="chain" id="PRO_0000423021" description="ATP-dependent 6-phosphofructokinase">
    <location>
        <begin position="1"/>
        <end position="436"/>
    </location>
</feature>
<feature type="active site" description="Proton acceptor" evidence="1">
    <location>
        <position position="211"/>
    </location>
</feature>
<feature type="binding site" evidence="1">
    <location>
        <position position="90"/>
    </location>
    <ligand>
        <name>ATP</name>
        <dbReference type="ChEBI" id="CHEBI:30616"/>
    </ligand>
</feature>
<feature type="binding site" evidence="1">
    <location>
        <begin position="155"/>
        <end position="156"/>
    </location>
    <ligand>
        <name>ATP</name>
        <dbReference type="ChEBI" id="CHEBI:30616"/>
    </ligand>
</feature>
<feature type="binding site" evidence="1">
    <location>
        <begin position="180"/>
        <end position="183"/>
    </location>
    <ligand>
        <name>ATP</name>
        <dbReference type="ChEBI" id="CHEBI:30616"/>
    </ligand>
</feature>
<feature type="binding site" evidence="1">
    <location>
        <position position="181"/>
    </location>
    <ligand>
        <name>Mg(2+)</name>
        <dbReference type="ChEBI" id="CHEBI:18420"/>
        <note>catalytic</note>
    </ligand>
</feature>
<feature type="binding site" evidence="1">
    <location>
        <begin position="209"/>
        <end position="211"/>
    </location>
    <ligand>
        <name>substrate</name>
    </ligand>
</feature>
<feature type="binding site" evidence="1">
    <location>
        <begin position="254"/>
        <end position="256"/>
    </location>
    <ligand>
        <name>substrate</name>
    </ligand>
</feature>
<feature type="binding site" evidence="1">
    <location>
        <position position="307"/>
    </location>
    <ligand>
        <name>substrate</name>
    </ligand>
</feature>
<feature type="binding site" evidence="1">
    <location>
        <begin position="362"/>
        <end position="365"/>
    </location>
    <ligand>
        <name>substrate</name>
    </ligand>
</feature>
<feature type="site" description="Important for substrate specificity; cannot use PPi as phosphoryl donor" evidence="1">
    <location>
        <position position="182"/>
    </location>
</feature>
<feature type="sequence conflict" description="In Ref. 1; CAA57659." evidence="4" ref="1">
    <original>R</original>
    <variation>A</variation>
    <location>
        <position position="109"/>
    </location>
</feature>
<feature type="sequence conflict" description="In Ref. 1; CAA57659." evidence="4" ref="1">
    <original>T</original>
    <variation>S</variation>
    <location>
        <position position="430"/>
    </location>
</feature>
<sequence length="436" mass="47670">MSVKRRDHILIPKNPDAPLPSLKIEEVGECTIDNIYASPEPFVNGMTMKLSAVKNHGIERDSGEVELAGPMEKIFYNPETTKVAIVTCGGLCPGLNNVIRGLVLNLYNRYHVNNIFGLRWGYEGLVPELSEVQRLTPEIVSDIHQKGGSILGTSRGAQSPEVMAQFLIDNNFNILFTLGGDGTLRGANAINKELRRRKVPITVVGIPKTIDNDICYTDSTFGFQTAVGLSQEAINAVHSEAKSAKNGIGIVRLMGRDAGFIALYASLANGDANLVLIPEIDIPITQICEFVGKRIMSKGHVVIVVAEGALQNQKPKDLDLGTDKSGNILHWDSINYLRDSITKYLKSIGIEEHTIKFVDPSYMIRSAPCSAADAHFCMCLANAAVHVAMAGKTGLVICHHHNNFVSVPIDRTSYYIKRVNTDGPLYTMMTAIEKPK</sequence>
<protein>
    <recommendedName>
        <fullName evidence="1">ATP-dependent 6-phosphofructokinase</fullName>
        <shortName evidence="1">ATP-PFK</shortName>
        <shortName evidence="1">Phosphofructokinase</shortName>
        <ecNumber evidence="1">2.7.1.11</ecNumber>
    </recommendedName>
    <alternativeName>
        <fullName evidence="1">Phosphohexokinase</fullName>
    </alternativeName>
</protein>
<proteinExistence type="evidence at protein level"/>
<gene>
    <name type="primary">PPi-PFK</name>
    <name type="ORF">EHI_103590</name>
</gene>
<dbReference type="EC" id="2.7.1.11" evidence="1"/>
<dbReference type="EMBL" id="X82173">
    <property type="protein sequence ID" value="CAA57659.1"/>
    <property type="molecule type" value="mRNA"/>
</dbReference>
<dbReference type="EMBL" id="DS571158">
    <property type="protein sequence ID" value="EAL47987.1"/>
    <property type="molecule type" value="Genomic_DNA"/>
</dbReference>
<dbReference type="EMBL" id="U12513">
    <property type="protein sequence ID" value="AAA92671.1"/>
    <property type="status" value="ALT_SEQ"/>
    <property type="molecule type" value="Genomic_DNA"/>
</dbReference>
<dbReference type="PIR" id="S49458">
    <property type="entry name" value="S49458"/>
</dbReference>
<dbReference type="RefSeq" id="XP_653373.1">
    <property type="nucleotide sequence ID" value="XM_648281.1"/>
</dbReference>
<dbReference type="SMR" id="Q27651"/>
<dbReference type="STRING" id="5759.Q27651"/>
<dbReference type="EnsemblProtists" id="rna_EHI_103590-1">
    <property type="protein sequence ID" value="rna_EHI_103590-1"/>
    <property type="gene ID" value="EHI_103590"/>
</dbReference>
<dbReference type="GeneID" id="3407680"/>
<dbReference type="KEGG" id="ehi:EHI_103590"/>
<dbReference type="VEuPathDB" id="AmoebaDB:EHI5A_077230"/>
<dbReference type="VEuPathDB" id="AmoebaDB:EHI7A_062050"/>
<dbReference type="VEuPathDB" id="AmoebaDB:EHI8A_049590"/>
<dbReference type="VEuPathDB" id="AmoebaDB:EHI_103590"/>
<dbReference type="VEuPathDB" id="AmoebaDB:KM1_109080"/>
<dbReference type="eggNOG" id="KOG2440">
    <property type="taxonomic scope" value="Eukaryota"/>
</dbReference>
<dbReference type="HOGENOM" id="CLU_020655_7_4_1"/>
<dbReference type="InParanoid" id="Q27651"/>
<dbReference type="OMA" id="ERMGINM"/>
<dbReference type="OrthoDB" id="537915at2759"/>
<dbReference type="BRENDA" id="2.7.1.90">
    <property type="organism ID" value="2080"/>
</dbReference>
<dbReference type="UniPathway" id="UPA00109">
    <property type="reaction ID" value="UER00182"/>
</dbReference>
<dbReference type="Proteomes" id="UP000001926">
    <property type="component" value="Partially assembled WGS sequence"/>
</dbReference>
<dbReference type="GO" id="GO:0005737">
    <property type="term" value="C:cytoplasm"/>
    <property type="evidence" value="ECO:0000318"/>
    <property type="project" value="GO_Central"/>
</dbReference>
<dbReference type="GO" id="GO:0003872">
    <property type="term" value="F:6-phosphofructokinase activity"/>
    <property type="evidence" value="ECO:0000318"/>
    <property type="project" value="GO_Central"/>
</dbReference>
<dbReference type="GO" id="GO:0005524">
    <property type="term" value="F:ATP binding"/>
    <property type="evidence" value="ECO:0007669"/>
    <property type="project" value="UniProtKB-KW"/>
</dbReference>
<dbReference type="GO" id="GO:0046872">
    <property type="term" value="F:metal ion binding"/>
    <property type="evidence" value="ECO:0007669"/>
    <property type="project" value="UniProtKB-KW"/>
</dbReference>
<dbReference type="GO" id="GO:0006002">
    <property type="term" value="P:fructose 6-phosphate metabolic process"/>
    <property type="evidence" value="ECO:0007669"/>
    <property type="project" value="InterPro"/>
</dbReference>
<dbReference type="FunFam" id="3.40.50.450:FF:000002">
    <property type="entry name" value="ATP-dependent 6-phosphofructokinase"/>
    <property type="match status" value="1"/>
</dbReference>
<dbReference type="Gene3D" id="3.40.50.450">
    <property type="match status" value="1"/>
</dbReference>
<dbReference type="HAMAP" id="MF_01981">
    <property type="entry name" value="Phosphofructokinase_II_X"/>
    <property type="match status" value="1"/>
</dbReference>
<dbReference type="InterPro" id="IPR022953">
    <property type="entry name" value="ATP_PFK"/>
</dbReference>
<dbReference type="InterPro" id="IPR050929">
    <property type="entry name" value="PFKA"/>
</dbReference>
<dbReference type="InterPro" id="IPR000023">
    <property type="entry name" value="Phosphofructokinase_dom"/>
</dbReference>
<dbReference type="InterPro" id="IPR035966">
    <property type="entry name" value="PKF_sf"/>
</dbReference>
<dbReference type="InterPro" id="IPR012004">
    <property type="entry name" value="PyroP-dep_PFK_TP0108"/>
</dbReference>
<dbReference type="NCBIfam" id="NF005301">
    <property type="entry name" value="PRK06830.1"/>
    <property type="match status" value="1"/>
</dbReference>
<dbReference type="PANTHER" id="PTHR45770">
    <property type="entry name" value="ATP-DEPENDENT 6-PHOSPHOFRUCTOKINASE 1"/>
    <property type="match status" value="1"/>
</dbReference>
<dbReference type="Pfam" id="PF00365">
    <property type="entry name" value="PFK"/>
    <property type="match status" value="1"/>
</dbReference>
<dbReference type="PIRSF" id="PIRSF000534">
    <property type="entry name" value="PPi_PFK_TP0108"/>
    <property type="match status" value="1"/>
</dbReference>
<dbReference type="PRINTS" id="PR00476">
    <property type="entry name" value="PHFRCTKINASE"/>
</dbReference>
<dbReference type="SUPFAM" id="SSF53784">
    <property type="entry name" value="Phosphofructokinase"/>
    <property type="match status" value="1"/>
</dbReference>
<reference key="1">
    <citation type="journal article" date="1996" name="Biochem. J.">
        <title>Pyrophosphate-dependent phosphofructokinase of Entamoeba histolytica: molecular cloning, recombinant expression and inhibition by pyrophosphate analogues.</title>
        <authorList>
            <person name="Bruchhaus I."/>
            <person name="Jacobs T."/>
            <person name="Denart M."/>
            <person name="Tannich E."/>
        </authorList>
    </citation>
    <scope>NUCLEOTIDE SEQUENCE [MRNA]</scope>
    <scope>ACTIVITY REGULATION</scope>
    <source>
        <strain>ATCC 30459 / HM-1:IMSS / ABRM</strain>
    </source>
</reference>
<reference key="2">
    <citation type="journal article" date="2005" name="Nature">
        <title>The genome of the protist parasite Entamoeba histolytica.</title>
        <authorList>
            <person name="Loftus B.J."/>
            <person name="Anderson I."/>
            <person name="Davies R."/>
            <person name="Alsmark U.C."/>
            <person name="Samuelson J."/>
            <person name="Amedeo P."/>
            <person name="Roncaglia P."/>
            <person name="Berriman M."/>
            <person name="Hirt R.P."/>
            <person name="Mann B.J."/>
            <person name="Nozaki T."/>
            <person name="Suh B."/>
            <person name="Pop M."/>
            <person name="Duchene M."/>
            <person name="Ackers J."/>
            <person name="Tannich E."/>
            <person name="Leippe M."/>
            <person name="Hofer M."/>
            <person name="Bruchhaus I."/>
            <person name="Willhoeft U."/>
            <person name="Bhattacharya A."/>
            <person name="Chillingworth T."/>
            <person name="Churcher C.M."/>
            <person name="Hance Z."/>
            <person name="Harris B."/>
            <person name="Harris D."/>
            <person name="Jagels K."/>
            <person name="Moule S."/>
            <person name="Mungall K.L."/>
            <person name="Ormond D."/>
            <person name="Squares R."/>
            <person name="Whitehead S."/>
            <person name="Quail M.A."/>
            <person name="Rabbinowitsch E."/>
            <person name="Norbertczak H."/>
            <person name="Price C."/>
            <person name="Wang Z."/>
            <person name="Guillen N."/>
            <person name="Gilchrist C."/>
            <person name="Stroup S.E."/>
            <person name="Bhattacharya S."/>
            <person name="Lohia A."/>
            <person name="Foster P.G."/>
            <person name="Sicheritz-Ponten T."/>
            <person name="Weber C."/>
            <person name="Singh U."/>
            <person name="Mukherjee C."/>
            <person name="El-Sayed N.M.A."/>
            <person name="Petri W.A."/>
            <person name="Clark C.G."/>
            <person name="Embley T.M."/>
            <person name="Barrell B.G."/>
            <person name="Fraser C.M."/>
            <person name="Hall N."/>
        </authorList>
    </citation>
    <scope>NUCLEOTIDE SEQUENCE [LARGE SCALE GENOMIC DNA]</scope>
    <source>
        <strain>ATCC 30459 / HM-1:IMSS / ABRM</strain>
    </source>
</reference>
<reference key="3">
    <citation type="journal article" date="2010" name="PLoS Negl. Trop. Dis.">
        <title>New assembly, reannotation and analysis of the Entamoeba histolytica genome reveal new genomic features and protein content information.</title>
        <authorList>
            <person name="Lorenzi H.A."/>
            <person name="Puiu D."/>
            <person name="Miller J.R."/>
            <person name="Brinkac L.M."/>
            <person name="Amedeo P."/>
            <person name="Hall N."/>
            <person name="Caler E.V."/>
        </authorList>
    </citation>
    <scope>GENOME REANNOTATION</scope>
    <source>
        <strain>ATCC 30459 / HM-1:IMSS / ABRM</strain>
    </source>
</reference>
<reference key="4">
    <citation type="journal article" date="1995" name="Biochim. Biophys. Acta">
        <title>Cloning and sequencing a putative pyrophosphate-dependent phosphofructokinase gene from Entamoeba histolytica.</title>
        <authorList>
            <person name="Huang M."/>
            <person name="Albach R.A."/>
            <person name="Chang K.P."/>
            <person name="Tripathi R.L."/>
            <person name="Kemp R.G."/>
        </authorList>
    </citation>
    <scope>NUCLEOTIDE SEQUENCE [GENOMIC DNA] OF 19-436</scope>
    <source>
        <strain>ATCC 30459 / HM-1:IMSS / ABRM</strain>
    </source>
</reference>
<reference key="5">
    <citation type="journal article" date="2001" name="J. Biol. Chem.">
        <title>The two phosphofructokinase gene products of Entamoeba histolytica.</title>
        <authorList>
            <person name="Chi A.S."/>
            <person name="Deng Z."/>
            <person name="Albach R.A."/>
            <person name="Kemp R.G."/>
        </authorList>
    </citation>
    <scope>FUNCTION</scope>
    <scope>SUBUNIT</scope>
    <scope>COFACTOR</scope>
</reference>
<comment type="function">
    <text evidence="1 2">Catalyzes the phosphorylation of D-fructose 6-phosphate to fructose 1,6-bisphosphate by ATP, the first committing step of glycolysis.</text>
</comment>
<comment type="catalytic activity">
    <reaction evidence="1">
        <text>beta-D-fructose 6-phosphate + ATP = beta-D-fructose 1,6-bisphosphate + ADP + H(+)</text>
        <dbReference type="Rhea" id="RHEA:16109"/>
        <dbReference type="ChEBI" id="CHEBI:15378"/>
        <dbReference type="ChEBI" id="CHEBI:30616"/>
        <dbReference type="ChEBI" id="CHEBI:32966"/>
        <dbReference type="ChEBI" id="CHEBI:57634"/>
        <dbReference type="ChEBI" id="CHEBI:456216"/>
        <dbReference type="EC" id="2.7.1.11"/>
    </reaction>
</comment>
<comment type="cofactor">
    <cofactor evidence="1 2">
        <name>Mg(2+)</name>
        <dbReference type="ChEBI" id="CHEBI:18420"/>
    </cofactor>
</comment>
<comment type="activity regulation">
    <text evidence="3">Activated by nucleoside triphosphates. Inhibited by phosphoenolpyruvate. EDTA and biphosphonates play the role of inhibitors of kinase activity.</text>
</comment>
<comment type="biophysicochemical properties">
    <kinetics>
        <KM>0.12 mM for ATP</KM>
        <KM>0.067 mM for GTP</KM>
        <KM>0.136 mM for ITP</KM>
        <KM>1.93 mM for UTP</KM>
        <KM>3.6 mM for CTP</KM>
        <KM>3.8 mM for fructose 6-phosphate</KM>
    </kinetics>
    <phDependence>
        <text>Optimum pH is 6-7.</text>
    </phDependence>
</comment>
<comment type="pathway">
    <text evidence="1">Carbohydrate degradation; glycolysis; D-glyceraldehyde 3-phosphate and glycerone phosphate from D-glucose: step 3/4.</text>
</comment>
<comment type="subunit">
    <text evidence="2">Homodimer. Aggregates to a homotetramer after activation by ATP.</text>
</comment>
<comment type="subcellular location">
    <subcellularLocation>
        <location evidence="1">Cytoplasm</location>
    </subcellularLocation>
</comment>
<comment type="similarity">
    <text evidence="1">Belongs to the phosphofructokinase type A (PFKA) family. PPi-dependent PFK group II subfamily. Atypical ATP-dependent clade 'X' sub-subfamily.</text>
</comment>
<comment type="caution">
    <text evidence="5 6">Was originally thought to be a PPi-dependent phosphofructokinase (PubMed:8645233), but it has later been shown that the enzyme does not possess PPi-dependent activity and instead is an ATP-dependent phosphofructokinase (PubMed:11262402).</text>
</comment>
<comment type="sequence caution" evidence="4">
    <conflict type="erroneous initiation">
        <sequence resource="EMBL-CDS" id="AAA92671"/>
    </conflict>
    <text>Truncated N-terminus.</text>
</comment>
<comment type="sequence caution" evidence="4">
    <conflict type="frameshift">
        <sequence resource="EMBL-CDS" id="AAA92671"/>
    </conflict>
</comment>
<accession>Q27651</accession>
<accession>C4LVK3</accession>
<accession>Q24812</accession>
<organism>
    <name type="scientific">Entamoeba histolytica (strain ATCC 30459 / HM-1:IMSS / ABRM)</name>
    <dbReference type="NCBI Taxonomy" id="294381"/>
    <lineage>
        <taxon>Eukaryota</taxon>
        <taxon>Amoebozoa</taxon>
        <taxon>Evosea</taxon>
        <taxon>Archamoebae</taxon>
        <taxon>Mastigamoebida</taxon>
        <taxon>Entamoebidae</taxon>
        <taxon>Entamoeba</taxon>
    </lineage>
</organism>
<evidence type="ECO:0000255" key="1">
    <source>
        <dbReference type="HAMAP-Rule" id="MF_03186"/>
    </source>
</evidence>
<evidence type="ECO:0000269" key="2">
    <source>
    </source>
</evidence>
<evidence type="ECO:0000269" key="3">
    <source>
    </source>
</evidence>
<evidence type="ECO:0000305" key="4"/>
<evidence type="ECO:0000305" key="5">
    <source>
    </source>
</evidence>
<evidence type="ECO:0000305" key="6">
    <source>
    </source>
</evidence>